<comment type="function">
    <text evidence="2 3">Prenyltransferase; part of the gene cluster that mediates the biosynthesis of clavilactone A, a meroterpenoid that features a unique benzo-fused ten-membered carbocyclic ring unit with an alpha,beta-epoxy-gamma-lactone moiety, forming an intriguing 10/5/3 tricyclic nested skeleton (PubMed:38602511, Ref.2). ClaR, ClaS and ClaT are sufficient to produce clavilactone A (PubMed:38602511). Within the pathway, claS acts as an atypical UbiA prenyltransferase that transfers geranyl pyrophosphate (GPP) to hydroquinone (HYQ) instead of p-hydroxybenzoic acid (PHB), producing the first intermediate geranylhydroquinone (Ref.2). The cytochrome P450 monooxygenase claR then catalyzes the diradical coupling reaction between the intramolecular hydroquinone and allyl moieties to form the benzo-fused ten-membered carbocyclic ring unit of wigantol. Finally the cytochrome P450 monooxygenase claT exquisitely and stereoselectively assembles the alpha,beta-epoxy-gamma-lactone moiety, producing clavilactone A via arnebinol A (PubMed:38602511).</text>
</comment>
<comment type="catalytic activity">
    <reaction evidence="3">
        <text>hydroquinone + (2E)-geranyl diphosphate = (2E)-geranylhydroquinone + diphosphate</text>
        <dbReference type="Rhea" id="RHEA:82475"/>
        <dbReference type="ChEBI" id="CHEBI:17594"/>
        <dbReference type="ChEBI" id="CHEBI:24233"/>
        <dbReference type="ChEBI" id="CHEBI:33019"/>
        <dbReference type="ChEBI" id="CHEBI:58057"/>
    </reaction>
    <physiologicalReaction direction="left-to-right" evidence="3">
        <dbReference type="Rhea" id="RHEA:82476"/>
    </physiologicalReaction>
</comment>
<comment type="cofactor">
    <cofactor evidence="7">
        <name>Mg(2+)</name>
        <dbReference type="ChEBI" id="CHEBI:18420"/>
    </cofactor>
</comment>
<comment type="biophysicochemical properties">
    <kinetics>
        <KM evidence="3">118 uM for hydroquinone (HYQ)</KM>
    </kinetics>
</comment>
<comment type="pathway">
    <text evidence="3">Secondary metabolite biosynthesis; terpenoid biosynthesis.</text>
</comment>
<comment type="subcellular location">
    <subcellularLocation>
        <location evidence="1">Membrane</location>
        <topology evidence="1">Multi-pass membrane protein</topology>
    </subcellularLocation>
</comment>
<comment type="domain">
    <text evidence="3">The conserved residue His-73 is the gatekeeper residue for hydroquinone (HYQ) substrate preference.</text>
</comment>
<comment type="domain">
    <text evidence="3">Contains the three motifs NDxxDxxxD, DxxxD, and YxxxK, which are highly conserved in other UbiA prenyltransferases (Ref.2). Motifs NDxxDxxxD and DxxxD are involved in the binding to Mg(2+), whereas motif YxxxK plays a pivotal role in GPP stabilization (Ref.2).</text>
</comment>
<comment type="similarity">
    <text evidence="6">Belongs to the UbiA prenyltransferase family.</text>
</comment>
<reference key="1">
    <citation type="journal article" date="2024" name="J. Am. Chem. Soc.">
        <title>Two cytochrome P450 enzymes form the tricyclic nested skeleton of meroterpenoids by sequential oxidative reactions.</title>
        <authorList>
            <person name="Yang E."/>
            <person name="Yao Y."/>
            <person name="Su H."/>
            <person name="Sun Z."/>
            <person name="Gao S.S."/>
            <person name="Sureram S."/>
            <person name="Kittakoop P."/>
            <person name="Fan K."/>
            <person name="Pan Y."/>
            <person name="Xu X."/>
            <person name="Sun Z.H."/>
            <person name="Ma G."/>
            <person name="Liu G."/>
        </authorList>
    </citation>
    <scope>NUCLEOTIDE SEQUENCE [GENOMIC DNA]</scope>
    <scope>FUNCTION</scope>
    <scope>CATALYTIC ACTIVITY</scope>
    <scope>BIOPHYSICOCHEMICAL PROPERTIES</scope>
    <scope>PATHWAY</scope>
</reference>
<reference key="2">
    <citation type="journal article" date="2023" name="ACS Catal.">
        <title>A Gatekeeper residue controls aromatic acceptor specificity of the PHB-Type UbiA prenyltransferases.</title>
        <authorList>
            <person name="Yang E."/>
            <person name="Yao Y."/>
            <person name="Liu Y."/>
            <person name="Sun Z."/>
            <person name="Shi T."/>
            <person name="Pan Y."/>
            <person name="Gao S.S."/>
            <person name="Xu X."/>
            <person name="Ma G."/>
            <person name="Liu G."/>
        </authorList>
    </citation>
    <scope>FUNCTION</scope>
    <scope>CATALYTIC ACTIVITY</scope>
    <scope>MUTAGENESIS OF HIS-73; GLY-76; CYS-77; ASN-80; ASP-84; ASP-88; ARG-93; ARG-97; TYR-146; LYS-150; LEU-160; TYR-201; ASP-205 AND ASP-209</scope>
    <scope>DOMAIN</scope>
    <scope>PATHWAY</scope>
</reference>
<evidence type="ECO:0000255" key="1"/>
<evidence type="ECO:0000269" key="2">
    <source>
    </source>
</evidence>
<evidence type="ECO:0000269" key="3">
    <source ref="2"/>
</evidence>
<evidence type="ECO:0000303" key="4">
    <source>
    </source>
</evidence>
<evidence type="ECO:0000303" key="5">
    <source ref="2"/>
</evidence>
<evidence type="ECO:0000305" key="6"/>
<evidence type="ECO:0000305" key="7">
    <source ref="2"/>
</evidence>
<dbReference type="EC" id="2.5.1.-" evidence="3"/>
<dbReference type="EMBL" id="PP505398">
    <property type="protein sequence ID" value="WYC13320.1"/>
    <property type="molecule type" value="Genomic_DNA"/>
</dbReference>
<dbReference type="SMR" id="P9WEI6"/>
<dbReference type="UniPathway" id="UPA00213"/>
<dbReference type="GO" id="GO:0005743">
    <property type="term" value="C:mitochondrial inner membrane"/>
    <property type="evidence" value="ECO:0007669"/>
    <property type="project" value="UniProtKB-UniRule"/>
</dbReference>
<dbReference type="GO" id="GO:0008412">
    <property type="term" value="F:4-hydroxybenzoate polyprenyltransferase activity"/>
    <property type="evidence" value="ECO:0007669"/>
    <property type="project" value="TreeGrafter"/>
</dbReference>
<dbReference type="GO" id="GO:0008299">
    <property type="term" value="P:isoprenoid biosynthetic process"/>
    <property type="evidence" value="ECO:0007669"/>
    <property type="project" value="UniProtKB-UniRule"/>
</dbReference>
<dbReference type="GO" id="GO:0006744">
    <property type="term" value="P:ubiquinone biosynthetic process"/>
    <property type="evidence" value="ECO:0007669"/>
    <property type="project" value="UniProtKB-UniRule"/>
</dbReference>
<dbReference type="CDD" id="cd13959">
    <property type="entry name" value="PT_UbiA_COQ2"/>
    <property type="match status" value="1"/>
</dbReference>
<dbReference type="FunFam" id="1.10.357.140:FF:000008">
    <property type="entry name" value="4-hydroxybenzoate octaprenyltransferase"/>
    <property type="match status" value="1"/>
</dbReference>
<dbReference type="FunFam" id="1.20.120.1780:FF:000001">
    <property type="entry name" value="4-hydroxybenzoate octaprenyltransferase"/>
    <property type="match status" value="1"/>
</dbReference>
<dbReference type="Gene3D" id="1.10.357.140">
    <property type="entry name" value="UbiA prenyltransferase"/>
    <property type="match status" value="1"/>
</dbReference>
<dbReference type="Gene3D" id="1.20.120.1780">
    <property type="entry name" value="UbiA prenyltransferase"/>
    <property type="match status" value="1"/>
</dbReference>
<dbReference type="HAMAP" id="MF_01635">
    <property type="entry name" value="UbiA"/>
    <property type="match status" value="1"/>
</dbReference>
<dbReference type="InterPro" id="IPR006370">
    <property type="entry name" value="HB_polyprenyltransferase-like"/>
</dbReference>
<dbReference type="InterPro" id="IPR039653">
    <property type="entry name" value="Prenyltransferase"/>
</dbReference>
<dbReference type="InterPro" id="IPR000537">
    <property type="entry name" value="UbiA_prenyltransferase"/>
</dbReference>
<dbReference type="InterPro" id="IPR030470">
    <property type="entry name" value="UbiA_prenylTrfase_CS"/>
</dbReference>
<dbReference type="InterPro" id="IPR044878">
    <property type="entry name" value="UbiA_sf"/>
</dbReference>
<dbReference type="PANTHER" id="PTHR11048:SF28">
    <property type="entry name" value="4-HYDROXYBENZOATE POLYPRENYLTRANSFERASE, MITOCHONDRIAL"/>
    <property type="match status" value="1"/>
</dbReference>
<dbReference type="PANTHER" id="PTHR11048">
    <property type="entry name" value="PRENYLTRANSFERASES"/>
    <property type="match status" value="1"/>
</dbReference>
<dbReference type="Pfam" id="PF01040">
    <property type="entry name" value="UbiA"/>
    <property type="match status" value="1"/>
</dbReference>
<proteinExistence type="evidence at protein level"/>
<organism>
    <name type="scientific">Ampulloclitocybe clavipes</name>
    <name type="common">Club foot</name>
    <name type="synonym">Clitocybe clavipes</name>
    <dbReference type="NCBI Taxonomy" id="56467"/>
    <lineage>
        <taxon>Eukaryota</taxon>
        <taxon>Fungi</taxon>
        <taxon>Dikarya</taxon>
        <taxon>Basidiomycota</taxon>
        <taxon>Agaricomycotina</taxon>
        <taxon>Agaricomycetes</taxon>
        <taxon>Agaricomycetidae</taxon>
        <taxon>Agaricales</taxon>
        <taxon>Hygrophoraceae</taxon>
        <taxon>Ampulloclitocybe</taxon>
    </lineage>
</organism>
<sequence>MAVASSTRPSQKQSTSKLQPWIQLTRVRKFAGTMVLFWPFAWGLTMAARALLLPVQTFGTILACGFFASCLLHSAGCIWNDILDQDFDRQVERTKSRPIASGAISNTGALIFMFAHLFILMGMIWTSNSLAWMIGIISIFPLPGIYPLMKRITYWPQAWLGIALNTGIVMAWAYTTGTYPTSSIVLSVGAWAWTIYYDTIYACQDKKDDINAGVKSTALLFGSYIKPVLSLFGSIIVGSLLISGILNNQELPYFLVSVGGGGLHLATQLWQVDLDTPKSCWNAFHSTAFNFGAIVWAGLLLDYAWAVGVGAIM</sequence>
<name>CLAS_AMPCV</name>
<keyword id="KW-0472">Membrane</keyword>
<keyword id="KW-0808">Transferase</keyword>
<keyword id="KW-0812">Transmembrane</keyword>
<keyword id="KW-1133">Transmembrane helix</keyword>
<accession>P9WEI6</accession>
<feature type="chain" id="PRO_0000461432" description="UbiA prenyltransferase claS">
    <location>
        <begin position="1"/>
        <end position="313"/>
    </location>
</feature>
<feature type="transmembrane region" description="Helical" evidence="1">
    <location>
        <begin position="30"/>
        <end position="52"/>
    </location>
</feature>
<feature type="transmembrane region" description="Helical" evidence="1">
    <location>
        <begin position="57"/>
        <end position="79"/>
    </location>
</feature>
<feature type="transmembrane region" description="Helical" evidence="1">
    <location>
        <begin position="99"/>
        <end position="121"/>
    </location>
</feature>
<feature type="transmembrane region" description="Helical" evidence="1">
    <location>
        <begin position="131"/>
        <end position="148"/>
    </location>
</feature>
<feature type="transmembrane region" description="Helical" evidence="1">
    <location>
        <begin position="155"/>
        <end position="177"/>
    </location>
</feature>
<feature type="transmembrane region" description="Helical" evidence="1">
    <location>
        <begin position="227"/>
        <end position="247"/>
    </location>
</feature>
<feature type="transmembrane region" description="Helical" evidence="1">
    <location>
        <begin position="250"/>
        <end position="270"/>
    </location>
</feature>
<feature type="transmembrane region" description="Helical" evidence="1">
    <location>
        <begin position="293"/>
        <end position="313"/>
    </location>
</feature>
<feature type="short sequence motif" description="NDxxDxxxD" evidence="3">
    <location>
        <begin position="81"/>
        <end position="88"/>
    </location>
</feature>
<feature type="short sequence motif" description="DxxxD" evidence="3">
    <location>
        <begin position="205"/>
        <end position="209"/>
    </location>
</feature>
<feature type="short sequence motif" description="YxxxK" evidence="3">
    <location>
        <begin position="205"/>
        <end position="209"/>
    </location>
</feature>
<feature type="binding site" evidence="7">
    <location>
        <position position="84"/>
    </location>
    <ligand>
        <name>Mg(2+)</name>
        <dbReference type="ChEBI" id="CHEBI:18420"/>
    </ligand>
</feature>
<feature type="binding site" evidence="7">
    <location>
        <position position="88"/>
    </location>
    <ligand>
        <name>Mg(2+)</name>
        <dbReference type="ChEBI" id="CHEBI:18420"/>
    </ligand>
</feature>
<feature type="binding site" evidence="7">
    <location>
        <position position="205"/>
    </location>
    <ligand>
        <name>Mg(2+)</name>
        <dbReference type="ChEBI" id="CHEBI:18420"/>
    </ligand>
</feature>
<feature type="binding site" evidence="7">
    <location>
        <position position="209"/>
    </location>
    <ligand>
        <name>Mg(2+)</name>
        <dbReference type="ChEBI" id="CHEBI:18420"/>
    </ligand>
</feature>
<feature type="mutagenesis site" description="Retains only 16.9% catalytic activity." evidence="3">
    <original>H</original>
    <variation>A</variation>
    <location>
        <position position="73"/>
    </location>
</feature>
<feature type="mutagenesis site" description="Switches the substrate preference from hydroquinone (HYQ) to p-hydroxybenzoic acid (PHB)." evidence="3">
    <original>H</original>
    <variation>R</variation>
    <location>
        <position position="73"/>
    </location>
</feature>
<feature type="mutagenesis site" description="Completely loses the catalytic activity." evidence="3">
    <original>G</original>
    <variation>W</variation>
    <location>
        <position position="76"/>
    </location>
</feature>
<feature type="mutagenesis site" description="Completely loses the catalytic activity." evidence="3">
    <original>C</original>
    <variation>W</variation>
    <location>
        <position position="77"/>
    </location>
</feature>
<feature type="mutagenesis site" description="Completely loses the catalytic activity." evidence="3">
    <original>N</original>
    <variation>A</variation>
    <location>
        <position position="80"/>
    </location>
</feature>
<feature type="mutagenesis site" description="Completely loses the catalytic activity." evidence="3">
    <original>D</original>
    <variation>A</variation>
    <location>
        <position position="84"/>
    </location>
</feature>
<feature type="mutagenesis site" description="Completely loses the catalytic activity." evidence="3">
    <original>D</original>
    <variation>A</variation>
    <location>
        <position position="88"/>
    </location>
</feature>
<feature type="mutagenesis site" description="Retains only 14.5% catalytic activity." evidence="3">
    <original>R</original>
    <variation>A</variation>
    <location>
        <position position="93"/>
    </location>
</feature>
<feature type="mutagenesis site" description="Completely loses the catalytic activity." evidence="3">
    <original>R</original>
    <variation>A</variation>
    <location>
        <position position="97"/>
    </location>
</feature>
<feature type="mutagenesis site" description="Completely loses the catalytic activity." evidence="3">
    <original>Y</original>
    <variation>A</variation>
    <location>
        <position position="146"/>
    </location>
</feature>
<feature type="mutagenesis site" description="Completely loses the catalytic activity." evidence="3">
    <original>K</original>
    <variation>A</variation>
    <location>
        <position position="150"/>
    </location>
</feature>
<feature type="mutagenesis site" description="Completely loses the catalytic activity." evidence="3">
    <original>L</original>
    <variation>W</variation>
    <location>
        <position position="160"/>
    </location>
</feature>
<feature type="mutagenesis site" description="Completely loses the catalytic activity." evidence="3">
    <original>Y</original>
    <variation>A</variation>
    <location>
        <position position="201"/>
    </location>
</feature>
<feature type="mutagenesis site" description="Completely loses the catalytic activity." evidence="3">
    <original>D</original>
    <variation>A</variation>
    <location>
        <position position="205"/>
    </location>
</feature>
<feature type="mutagenesis site" description="Completely loses the catalytic activity." evidence="3">
    <original>D</original>
    <variation>A</variation>
    <location>
        <position position="209"/>
    </location>
</feature>
<protein>
    <recommendedName>
        <fullName evidence="4">UbiA prenyltransferase claS</fullName>
        <shortName evidence="5">PT claS</shortName>
        <ecNumber evidence="3">2.5.1.-</ecNumber>
    </recommendedName>
    <alternativeName>
        <fullName evidence="4">Clavilactone A biosynthesis cluster protein S</fullName>
    </alternativeName>
</protein>
<gene>
    <name evidence="4" type="primary">claS</name>
</gene>